<accession>B1L870</accession>
<sequence length="195" mass="21997">MTVERLENGVIVQRNTNEIEISITLDTVHGKLEGSTGVNFFDHLLNTFCHYSGLGLRVSTCESKDGILHHLIEDFGISLGLAFRELFDYTKVRRFGEATVPMNEALVGCYVDLSGRPFFQKNFEFSVEKIEDMPVEGFEEFMCGFVNHARITVHFFKFFGKNDHHISESAMKSFGLAIAKALESSEKKTTKGVID</sequence>
<gene>
    <name evidence="1" type="primary">hisB</name>
    <name type="ordered locus">TRQ2_1769</name>
</gene>
<organism>
    <name type="scientific">Thermotoga sp. (strain RQ2)</name>
    <dbReference type="NCBI Taxonomy" id="126740"/>
    <lineage>
        <taxon>Bacteria</taxon>
        <taxon>Thermotogati</taxon>
        <taxon>Thermotogota</taxon>
        <taxon>Thermotogae</taxon>
        <taxon>Thermotogales</taxon>
        <taxon>Thermotogaceae</taxon>
        <taxon>Thermotoga</taxon>
    </lineage>
</organism>
<evidence type="ECO:0000255" key="1">
    <source>
        <dbReference type="HAMAP-Rule" id="MF_00076"/>
    </source>
</evidence>
<name>HIS7_THESQ</name>
<protein>
    <recommendedName>
        <fullName evidence="1">Imidazoleglycerol-phosphate dehydratase</fullName>
        <shortName evidence="1">IGPD</shortName>
        <ecNumber evidence="1">4.2.1.19</ecNumber>
    </recommendedName>
</protein>
<keyword id="KW-0028">Amino-acid biosynthesis</keyword>
<keyword id="KW-0963">Cytoplasm</keyword>
<keyword id="KW-0368">Histidine biosynthesis</keyword>
<keyword id="KW-0456">Lyase</keyword>
<comment type="catalytic activity">
    <reaction evidence="1">
        <text>D-erythro-1-(imidazol-4-yl)glycerol 3-phosphate = 3-(imidazol-4-yl)-2-oxopropyl phosphate + H2O</text>
        <dbReference type="Rhea" id="RHEA:11040"/>
        <dbReference type="ChEBI" id="CHEBI:15377"/>
        <dbReference type="ChEBI" id="CHEBI:57766"/>
        <dbReference type="ChEBI" id="CHEBI:58278"/>
        <dbReference type="EC" id="4.2.1.19"/>
    </reaction>
</comment>
<comment type="pathway">
    <text evidence="1">Amino-acid biosynthesis; L-histidine biosynthesis; L-histidine from 5-phospho-alpha-D-ribose 1-diphosphate: step 6/9.</text>
</comment>
<comment type="subcellular location">
    <subcellularLocation>
        <location evidence="1">Cytoplasm</location>
    </subcellularLocation>
</comment>
<comment type="similarity">
    <text evidence="1">Belongs to the imidazoleglycerol-phosphate dehydratase family.</text>
</comment>
<dbReference type="EC" id="4.2.1.19" evidence="1"/>
<dbReference type="EMBL" id="CP000969">
    <property type="protein sequence ID" value="ACB10100.1"/>
    <property type="molecule type" value="Genomic_DNA"/>
</dbReference>
<dbReference type="RefSeq" id="WP_004080483.1">
    <property type="nucleotide sequence ID" value="NC_010483.1"/>
</dbReference>
<dbReference type="SMR" id="B1L870"/>
<dbReference type="KEGG" id="trq:TRQ2_1769"/>
<dbReference type="HOGENOM" id="CLU_044308_2_1_0"/>
<dbReference type="UniPathway" id="UPA00031">
    <property type="reaction ID" value="UER00011"/>
</dbReference>
<dbReference type="Proteomes" id="UP000001687">
    <property type="component" value="Chromosome"/>
</dbReference>
<dbReference type="GO" id="GO:0005737">
    <property type="term" value="C:cytoplasm"/>
    <property type="evidence" value="ECO:0007669"/>
    <property type="project" value="UniProtKB-SubCell"/>
</dbReference>
<dbReference type="GO" id="GO:0004424">
    <property type="term" value="F:imidazoleglycerol-phosphate dehydratase activity"/>
    <property type="evidence" value="ECO:0007669"/>
    <property type="project" value="UniProtKB-UniRule"/>
</dbReference>
<dbReference type="GO" id="GO:0000105">
    <property type="term" value="P:L-histidine biosynthetic process"/>
    <property type="evidence" value="ECO:0007669"/>
    <property type="project" value="UniProtKB-UniRule"/>
</dbReference>
<dbReference type="FunFam" id="3.30.230.40:FF:000008">
    <property type="entry name" value="Imidazoleglycerol-phosphate dehydratase"/>
    <property type="match status" value="1"/>
</dbReference>
<dbReference type="Gene3D" id="3.30.230.40">
    <property type="entry name" value="Imidazole glycerol phosphate dehydratase, domain 1"/>
    <property type="match status" value="2"/>
</dbReference>
<dbReference type="HAMAP" id="MF_00076">
    <property type="entry name" value="HisB"/>
    <property type="match status" value="1"/>
</dbReference>
<dbReference type="InterPro" id="IPR038494">
    <property type="entry name" value="IGPD_sf"/>
</dbReference>
<dbReference type="InterPro" id="IPR000807">
    <property type="entry name" value="ImidazoleglycerolP_deHydtase"/>
</dbReference>
<dbReference type="InterPro" id="IPR020565">
    <property type="entry name" value="ImidazoleglycerP_deHydtase_CS"/>
</dbReference>
<dbReference type="InterPro" id="IPR020568">
    <property type="entry name" value="Ribosomal_Su5_D2-typ_SF"/>
</dbReference>
<dbReference type="PANTHER" id="PTHR23133:SF2">
    <property type="entry name" value="IMIDAZOLEGLYCEROL-PHOSPHATE DEHYDRATASE"/>
    <property type="match status" value="1"/>
</dbReference>
<dbReference type="PANTHER" id="PTHR23133">
    <property type="entry name" value="IMIDAZOLEGLYCEROL-PHOSPHATE DEHYDRATASE HIS7"/>
    <property type="match status" value="1"/>
</dbReference>
<dbReference type="Pfam" id="PF00475">
    <property type="entry name" value="IGPD"/>
    <property type="match status" value="1"/>
</dbReference>
<dbReference type="SUPFAM" id="SSF54211">
    <property type="entry name" value="Ribosomal protein S5 domain 2-like"/>
    <property type="match status" value="2"/>
</dbReference>
<dbReference type="PROSITE" id="PS00955">
    <property type="entry name" value="IGP_DEHYDRATASE_2"/>
    <property type="match status" value="1"/>
</dbReference>
<reference key="1">
    <citation type="journal article" date="2011" name="J. Bacteriol.">
        <title>Genome sequence of Thermotoga sp. strain RQ2, a hyperthermophilic bacterium isolated from a geothermally heated region of the seafloor near Ribeira Quente, the Azores.</title>
        <authorList>
            <person name="Swithers K.S."/>
            <person name="DiPippo J.L."/>
            <person name="Bruce D.C."/>
            <person name="Detter C."/>
            <person name="Tapia R."/>
            <person name="Han S."/>
            <person name="Saunders E."/>
            <person name="Goodwin L.A."/>
            <person name="Han J."/>
            <person name="Woyke T."/>
            <person name="Pitluck S."/>
            <person name="Pennacchio L."/>
            <person name="Nolan M."/>
            <person name="Mikhailova N."/>
            <person name="Lykidis A."/>
            <person name="Land M.L."/>
            <person name="Brettin T."/>
            <person name="Stetter K.O."/>
            <person name="Nelson K.E."/>
            <person name="Gogarten J.P."/>
            <person name="Noll K.M."/>
        </authorList>
    </citation>
    <scope>NUCLEOTIDE SEQUENCE [LARGE SCALE GENOMIC DNA]</scope>
    <source>
        <strain>RQ2</strain>
    </source>
</reference>
<proteinExistence type="inferred from homology"/>
<feature type="chain" id="PRO_1000092718" description="Imidazoleglycerol-phosphate dehydratase">
    <location>
        <begin position="1"/>
        <end position="195"/>
    </location>
</feature>